<protein>
    <recommendedName>
        <fullName evidence="1">Small ribosomal subunit protein uS14</fullName>
    </recommendedName>
    <alternativeName>
        <fullName evidence="2">30S ribosomal protein S14</fullName>
    </alternativeName>
</protein>
<reference key="1">
    <citation type="journal article" date="2004" name="Proc. Natl. Acad. Sci. U.S.A.">
        <title>Genomic analysis of Bacteroides fragilis reveals extensive DNA inversions regulating cell surface adaptation.</title>
        <authorList>
            <person name="Kuwahara T."/>
            <person name="Yamashita A."/>
            <person name="Hirakawa H."/>
            <person name="Nakayama H."/>
            <person name="Toh H."/>
            <person name="Okada N."/>
            <person name="Kuhara S."/>
            <person name="Hattori M."/>
            <person name="Hayashi T."/>
            <person name="Ohnishi Y."/>
        </authorList>
    </citation>
    <scope>NUCLEOTIDE SEQUENCE [LARGE SCALE GENOMIC DNA]</scope>
    <source>
        <strain>YCH46</strain>
    </source>
</reference>
<sequence>MAKESMKAREIKRAKLVAKYAEKRAALKQIVRTGDPAEAFEAAQKLQELPKNSNPIRMHNRCKLTGRPKGYIRQFGVSRIQFREMASNGLIPGVKKASW</sequence>
<evidence type="ECO:0000255" key="1">
    <source>
        <dbReference type="HAMAP-Rule" id="MF_00537"/>
    </source>
</evidence>
<evidence type="ECO:0000305" key="2"/>
<name>RS14_BACFR</name>
<keyword id="KW-0687">Ribonucleoprotein</keyword>
<keyword id="KW-0689">Ribosomal protein</keyword>
<keyword id="KW-0694">RNA-binding</keyword>
<keyword id="KW-0699">rRNA-binding</keyword>
<proteinExistence type="inferred from homology"/>
<feature type="chain" id="PRO_1000128303" description="Small ribosomal subunit protein uS14">
    <location>
        <begin position="1"/>
        <end position="99"/>
    </location>
</feature>
<dbReference type="EMBL" id="AP006841">
    <property type="protein sequence ID" value="BAD50911.1"/>
    <property type="molecule type" value="Genomic_DNA"/>
</dbReference>
<dbReference type="RefSeq" id="WP_005791558.1">
    <property type="nucleotide sequence ID" value="NZ_UYXF01000007.1"/>
</dbReference>
<dbReference type="RefSeq" id="YP_101445.1">
    <property type="nucleotide sequence ID" value="NC_006347.1"/>
</dbReference>
<dbReference type="SMR" id="Q64NM1"/>
<dbReference type="STRING" id="295405.BF4168"/>
<dbReference type="GeneID" id="60368252"/>
<dbReference type="KEGG" id="bfr:BF4168"/>
<dbReference type="PATRIC" id="fig|295405.11.peg.4022"/>
<dbReference type="HOGENOM" id="CLU_139869_0_1_10"/>
<dbReference type="OrthoDB" id="9810484at2"/>
<dbReference type="Proteomes" id="UP000002197">
    <property type="component" value="Chromosome"/>
</dbReference>
<dbReference type="GO" id="GO:0005737">
    <property type="term" value="C:cytoplasm"/>
    <property type="evidence" value="ECO:0007669"/>
    <property type="project" value="UniProtKB-ARBA"/>
</dbReference>
<dbReference type="GO" id="GO:0015935">
    <property type="term" value="C:small ribosomal subunit"/>
    <property type="evidence" value="ECO:0007669"/>
    <property type="project" value="TreeGrafter"/>
</dbReference>
<dbReference type="GO" id="GO:0019843">
    <property type="term" value="F:rRNA binding"/>
    <property type="evidence" value="ECO:0007669"/>
    <property type="project" value="UniProtKB-UniRule"/>
</dbReference>
<dbReference type="GO" id="GO:0003735">
    <property type="term" value="F:structural constituent of ribosome"/>
    <property type="evidence" value="ECO:0007669"/>
    <property type="project" value="InterPro"/>
</dbReference>
<dbReference type="GO" id="GO:0006412">
    <property type="term" value="P:translation"/>
    <property type="evidence" value="ECO:0007669"/>
    <property type="project" value="UniProtKB-UniRule"/>
</dbReference>
<dbReference type="FunFam" id="1.10.287.1480:FF:000001">
    <property type="entry name" value="30S ribosomal protein S14"/>
    <property type="match status" value="1"/>
</dbReference>
<dbReference type="Gene3D" id="1.10.287.1480">
    <property type="match status" value="1"/>
</dbReference>
<dbReference type="HAMAP" id="MF_00537">
    <property type="entry name" value="Ribosomal_uS14_1"/>
    <property type="match status" value="1"/>
</dbReference>
<dbReference type="InterPro" id="IPR001209">
    <property type="entry name" value="Ribosomal_uS14"/>
</dbReference>
<dbReference type="InterPro" id="IPR023036">
    <property type="entry name" value="Ribosomal_uS14_bac/plastid"/>
</dbReference>
<dbReference type="InterPro" id="IPR018271">
    <property type="entry name" value="Ribosomal_uS14_CS"/>
</dbReference>
<dbReference type="NCBIfam" id="NF006477">
    <property type="entry name" value="PRK08881.1"/>
    <property type="match status" value="1"/>
</dbReference>
<dbReference type="PANTHER" id="PTHR19836">
    <property type="entry name" value="30S RIBOSOMAL PROTEIN S14"/>
    <property type="match status" value="1"/>
</dbReference>
<dbReference type="PANTHER" id="PTHR19836:SF19">
    <property type="entry name" value="SMALL RIBOSOMAL SUBUNIT PROTEIN US14M"/>
    <property type="match status" value="1"/>
</dbReference>
<dbReference type="Pfam" id="PF00253">
    <property type="entry name" value="Ribosomal_S14"/>
    <property type="match status" value="1"/>
</dbReference>
<dbReference type="SUPFAM" id="SSF57716">
    <property type="entry name" value="Glucocorticoid receptor-like (DNA-binding domain)"/>
    <property type="match status" value="1"/>
</dbReference>
<dbReference type="PROSITE" id="PS00527">
    <property type="entry name" value="RIBOSOMAL_S14"/>
    <property type="match status" value="1"/>
</dbReference>
<organism>
    <name type="scientific">Bacteroides fragilis (strain YCH46)</name>
    <dbReference type="NCBI Taxonomy" id="295405"/>
    <lineage>
        <taxon>Bacteria</taxon>
        <taxon>Pseudomonadati</taxon>
        <taxon>Bacteroidota</taxon>
        <taxon>Bacteroidia</taxon>
        <taxon>Bacteroidales</taxon>
        <taxon>Bacteroidaceae</taxon>
        <taxon>Bacteroides</taxon>
    </lineage>
</organism>
<gene>
    <name evidence="1" type="primary">rpsN</name>
    <name type="ordered locus">BF4168</name>
</gene>
<accession>Q64NM1</accession>
<comment type="function">
    <text evidence="1">Binds 16S rRNA, required for the assembly of 30S particles and may also be responsible for determining the conformation of the 16S rRNA at the A site.</text>
</comment>
<comment type="subunit">
    <text evidence="1">Part of the 30S ribosomal subunit. Contacts proteins S3 and S10.</text>
</comment>
<comment type="similarity">
    <text evidence="1">Belongs to the universal ribosomal protein uS14 family.</text>
</comment>